<name>BPT_PARC0</name>
<organism>
    <name type="scientific">Paracidovorax citrulli (strain AAC00-1)</name>
    <name type="common">Acidovorax citrulli</name>
    <dbReference type="NCBI Taxonomy" id="397945"/>
    <lineage>
        <taxon>Bacteria</taxon>
        <taxon>Pseudomonadati</taxon>
        <taxon>Pseudomonadota</taxon>
        <taxon>Betaproteobacteria</taxon>
        <taxon>Burkholderiales</taxon>
        <taxon>Comamonadaceae</taxon>
        <taxon>Paracidovorax</taxon>
    </lineage>
</organism>
<sequence length="245" mass="28453">MTQLNDLPLQTLQFYATAPYPCSYLPDRQARSQVATPSHLIQSDVYSDLVARGFRRSGMFTYRPYCDGCQACTPLRVLAGEFRPDRSQRRAWKQHSILQTRVLRLCYEPEHYQLYLHYQRARHSGGGMDHDSIDQYTQFLLQSRVNSRLVEFRDPAPDGETGTLRMVSILDVLDDGLSAVYTFYDPDPDCSYGTFNVLWQIEQARTLGLAHVYLGYWIAESAKMNYKSRFHPHELRVHGEWQRGT</sequence>
<dbReference type="EC" id="2.3.2.29" evidence="1"/>
<dbReference type="EMBL" id="CP000512">
    <property type="protein sequence ID" value="ABM33669.1"/>
    <property type="molecule type" value="Genomic_DNA"/>
</dbReference>
<dbReference type="RefSeq" id="WP_011796179.1">
    <property type="nucleotide sequence ID" value="NC_008752.1"/>
</dbReference>
<dbReference type="SMR" id="A1TRT1"/>
<dbReference type="STRING" id="397945.Aave_3105"/>
<dbReference type="GeneID" id="79792792"/>
<dbReference type="KEGG" id="aav:Aave_3105"/>
<dbReference type="eggNOG" id="COG2935">
    <property type="taxonomic scope" value="Bacteria"/>
</dbReference>
<dbReference type="HOGENOM" id="CLU_077607_0_0_4"/>
<dbReference type="OrthoDB" id="9782022at2"/>
<dbReference type="Proteomes" id="UP000002596">
    <property type="component" value="Chromosome"/>
</dbReference>
<dbReference type="GO" id="GO:0005737">
    <property type="term" value="C:cytoplasm"/>
    <property type="evidence" value="ECO:0007669"/>
    <property type="project" value="UniProtKB-SubCell"/>
</dbReference>
<dbReference type="GO" id="GO:0004057">
    <property type="term" value="F:arginyl-tRNA--protein transferase activity"/>
    <property type="evidence" value="ECO:0007669"/>
    <property type="project" value="InterPro"/>
</dbReference>
<dbReference type="GO" id="GO:0008914">
    <property type="term" value="F:leucyl-tRNA--protein transferase activity"/>
    <property type="evidence" value="ECO:0007669"/>
    <property type="project" value="UniProtKB-UniRule"/>
</dbReference>
<dbReference type="GO" id="GO:0071596">
    <property type="term" value="P:ubiquitin-dependent protein catabolic process via the N-end rule pathway"/>
    <property type="evidence" value="ECO:0007669"/>
    <property type="project" value="InterPro"/>
</dbReference>
<dbReference type="HAMAP" id="MF_00689">
    <property type="entry name" value="Bpt"/>
    <property type="match status" value="1"/>
</dbReference>
<dbReference type="InterPro" id="IPR016181">
    <property type="entry name" value="Acyl_CoA_acyltransferase"/>
</dbReference>
<dbReference type="InterPro" id="IPR017138">
    <property type="entry name" value="Asp_Glu_LeuTrfase"/>
</dbReference>
<dbReference type="InterPro" id="IPR030700">
    <property type="entry name" value="N-end_Aminoacyl_Trfase"/>
</dbReference>
<dbReference type="InterPro" id="IPR007472">
    <property type="entry name" value="N-end_Aminoacyl_Trfase_C"/>
</dbReference>
<dbReference type="InterPro" id="IPR007471">
    <property type="entry name" value="N-end_Aminoacyl_Trfase_N"/>
</dbReference>
<dbReference type="NCBIfam" id="NF002341">
    <property type="entry name" value="PRK01305.1-1"/>
    <property type="match status" value="1"/>
</dbReference>
<dbReference type="NCBIfam" id="NF002342">
    <property type="entry name" value="PRK01305.1-3"/>
    <property type="match status" value="1"/>
</dbReference>
<dbReference type="NCBIfam" id="NF002346">
    <property type="entry name" value="PRK01305.2-3"/>
    <property type="match status" value="1"/>
</dbReference>
<dbReference type="PANTHER" id="PTHR21367">
    <property type="entry name" value="ARGININE-TRNA-PROTEIN TRANSFERASE 1"/>
    <property type="match status" value="1"/>
</dbReference>
<dbReference type="PANTHER" id="PTHR21367:SF1">
    <property type="entry name" value="ARGINYL-TRNA--PROTEIN TRANSFERASE 1"/>
    <property type="match status" value="1"/>
</dbReference>
<dbReference type="Pfam" id="PF04377">
    <property type="entry name" value="ATE_C"/>
    <property type="match status" value="1"/>
</dbReference>
<dbReference type="Pfam" id="PF04376">
    <property type="entry name" value="ATE_N"/>
    <property type="match status" value="1"/>
</dbReference>
<dbReference type="PIRSF" id="PIRSF037208">
    <property type="entry name" value="ATE_pro_prd"/>
    <property type="match status" value="1"/>
</dbReference>
<dbReference type="SUPFAM" id="SSF55729">
    <property type="entry name" value="Acyl-CoA N-acyltransferases (Nat)"/>
    <property type="match status" value="1"/>
</dbReference>
<gene>
    <name evidence="1" type="primary">bpt</name>
    <name type="ordered locus">Aave_3105</name>
</gene>
<keyword id="KW-0012">Acyltransferase</keyword>
<keyword id="KW-0963">Cytoplasm</keyword>
<keyword id="KW-0808">Transferase</keyword>
<reference key="1">
    <citation type="submission" date="2006-12" db="EMBL/GenBank/DDBJ databases">
        <title>Complete sequence of Acidovorax avenae subsp. citrulli AAC00-1.</title>
        <authorList>
            <person name="Copeland A."/>
            <person name="Lucas S."/>
            <person name="Lapidus A."/>
            <person name="Barry K."/>
            <person name="Detter J.C."/>
            <person name="Glavina del Rio T."/>
            <person name="Dalin E."/>
            <person name="Tice H."/>
            <person name="Pitluck S."/>
            <person name="Kiss H."/>
            <person name="Brettin T."/>
            <person name="Bruce D."/>
            <person name="Han C."/>
            <person name="Tapia R."/>
            <person name="Gilna P."/>
            <person name="Schmutz J."/>
            <person name="Larimer F."/>
            <person name="Land M."/>
            <person name="Hauser L."/>
            <person name="Kyrpides N."/>
            <person name="Kim E."/>
            <person name="Stahl D."/>
            <person name="Richardson P."/>
        </authorList>
    </citation>
    <scope>NUCLEOTIDE SEQUENCE [LARGE SCALE GENOMIC DNA]</scope>
    <source>
        <strain>AAC00-1</strain>
    </source>
</reference>
<evidence type="ECO:0000255" key="1">
    <source>
        <dbReference type="HAMAP-Rule" id="MF_00689"/>
    </source>
</evidence>
<proteinExistence type="inferred from homology"/>
<feature type="chain" id="PRO_1000045119" description="Aspartate/glutamate leucyltransferase">
    <location>
        <begin position="1"/>
        <end position="245"/>
    </location>
</feature>
<protein>
    <recommendedName>
        <fullName evidence="1">Aspartate/glutamate leucyltransferase</fullName>
        <ecNumber evidence="1">2.3.2.29</ecNumber>
    </recommendedName>
</protein>
<comment type="function">
    <text evidence="1">Functions in the N-end rule pathway of protein degradation where it conjugates Leu from its aminoacyl-tRNA to the N-termini of proteins containing an N-terminal aspartate or glutamate.</text>
</comment>
<comment type="catalytic activity">
    <reaction evidence="1">
        <text>N-terminal L-glutamyl-[protein] + L-leucyl-tRNA(Leu) = N-terminal L-leucyl-L-glutamyl-[protein] + tRNA(Leu) + H(+)</text>
        <dbReference type="Rhea" id="RHEA:50412"/>
        <dbReference type="Rhea" id="RHEA-COMP:9613"/>
        <dbReference type="Rhea" id="RHEA-COMP:9622"/>
        <dbReference type="Rhea" id="RHEA-COMP:12664"/>
        <dbReference type="Rhea" id="RHEA-COMP:12668"/>
        <dbReference type="ChEBI" id="CHEBI:15378"/>
        <dbReference type="ChEBI" id="CHEBI:64721"/>
        <dbReference type="ChEBI" id="CHEBI:78442"/>
        <dbReference type="ChEBI" id="CHEBI:78494"/>
        <dbReference type="ChEBI" id="CHEBI:133041"/>
        <dbReference type="EC" id="2.3.2.29"/>
    </reaction>
</comment>
<comment type="catalytic activity">
    <reaction evidence="1">
        <text>N-terminal L-aspartyl-[protein] + L-leucyl-tRNA(Leu) = N-terminal L-leucyl-L-aspartyl-[protein] + tRNA(Leu) + H(+)</text>
        <dbReference type="Rhea" id="RHEA:50420"/>
        <dbReference type="Rhea" id="RHEA-COMP:9613"/>
        <dbReference type="Rhea" id="RHEA-COMP:9622"/>
        <dbReference type="Rhea" id="RHEA-COMP:12669"/>
        <dbReference type="Rhea" id="RHEA-COMP:12674"/>
        <dbReference type="ChEBI" id="CHEBI:15378"/>
        <dbReference type="ChEBI" id="CHEBI:64720"/>
        <dbReference type="ChEBI" id="CHEBI:78442"/>
        <dbReference type="ChEBI" id="CHEBI:78494"/>
        <dbReference type="ChEBI" id="CHEBI:133042"/>
        <dbReference type="EC" id="2.3.2.29"/>
    </reaction>
</comment>
<comment type="subcellular location">
    <subcellularLocation>
        <location evidence="1">Cytoplasm</location>
    </subcellularLocation>
</comment>
<comment type="similarity">
    <text evidence="1">Belongs to the R-transferase family. Bpt subfamily.</text>
</comment>
<accession>A1TRT1</accession>